<name>NU4M_ATRPI</name>
<sequence>PIAGSMVLAAILLKLGGYGIIRMMQILPTTKTDMFLPFIVLALWGAILANLTCLQQTDLKSLIAYSSISHMGLVVAAIIIQTPWGLTGAMTLMIAHGFTSSALFCLANTTYERTHTRILILTRGFHNILPMTTTWWLLANLMNIATPPTLNFTSELLIMSTLFNWCPTTIILLGLSMLITASYSLHMFLSTQMGPTPLNNQTEPTHSREHLLMALHLIPLMMISMKPELII</sequence>
<keyword id="KW-0249">Electron transport</keyword>
<keyword id="KW-0472">Membrane</keyword>
<keyword id="KW-0496">Mitochondrion</keyword>
<keyword id="KW-0520">NAD</keyword>
<keyword id="KW-0679">Respiratory chain</keyword>
<keyword id="KW-1278">Translocase</keyword>
<keyword id="KW-0812">Transmembrane</keyword>
<keyword id="KW-1133">Transmembrane helix</keyword>
<keyword id="KW-0813">Transport</keyword>
<keyword id="KW-0830">Ubiquinone</keyword>
<organism>
    <name type="scientific">Atropoides picadoi</name>
    <name type="common">Picado's pit viper</name>
    <name type="synonym">Porthidium picadoi</name>
    <dbReference type="NCBI Taxonomy" id="44729"/>
    <lineage>
        <taxon>Eukaryota</taxon>
        <taxon>Metazoa</taxon>
        <taxon>Chordata</taxon>
        <taxon>Craniata</taxon>
        <taxon>Vertebrata</taxon>
        <taxon>Euteleostomi</taxon>
        <taxon>Lepidosauria</taxon>
        <taxon>Squamata</taxon>
        <taxon>Bifurcata</taxon>
        <taxon>Unidentata</taxon>
        <taxon>Episquamata</taxon>
        <taxon>Toxicofera</taxon>
        <taxon>Serpentes</taxon>
        <taxon>Colubroidea</taxon>
        <taxon>Viperidae</taxon>
        <taxon>Crotalinae</taxon>
        <taxon>Atropoides</taxon>
    </lineage>
</organism>
<gene>
    <name type="primary">MT-ND4</name>
    <name type="synonym">MTND4</name>
    <name type="synonym">NADH4</name>
    <name type="synonym">ND4</name>
</gene>
<dbReference type="EC" id="7.1.1.2"/>
<dbReference type="EMBL" id="U41872">
    <property type="protein sequence ID" value="AAB46631.1"/>
    <property type="molecule type" value="Genomic_DNA"/>
</dbReference>
<dbReference type="SMR" id="O03695"/>
<dbReference type="GO" id="GO:0031966">
    <property type="term" value="C:mitochondrial membrane"/>
    <property type="evidence" value="ECO:0007669"/>
    <property type="project" value="UniProtKB-SubCell"/>
</dbReference>
<dbReference type="GO" id="GO:0008137">
    <property type="term" value="F:NADH dehydrogenase (ubiquinone) activity"/>
    <property type="evidence" value="ECO:0007669"/>
    <property type="project" value="UniProtKB-EC"/>
</dbReference>
<dbReference type="GO" id="GO:0048039">
    <property type="term" value="F:ubiquinone binding"/>
    <property type="evidence" value="ECO:0007669"/>
    <property type="project" value="TreeGrafter"/>
</dbReference>
<dbReference type="GO" id="GO:0042773">
    <property type="term" value="P:ATP synthesis coupled electron transport"/>
    <property type="evidence" value="ECO:0007669"/>
    <property type="project" value="InterPro"/>
</dbReference>
<dbReference type="GO" id="GO:0015990">
    <property type="term" value="P:electron transport coupled proton transport"/>
    <property type="evidence" value="ECO:0007669"/>
    <property type="project" value="TreeGrafter"/>
</dbReference>
<dbReference type="InterPro" id="IPR003918">
    <property type="entry name" value="NADH_UbQ_OxRdtase"/>
</dbReference>
<dbReference type="InterPro" id="IPR001750">
    <property type="entry name" value="ND/Mrp_TM"/>
</dbReference>
<dbReference type="PANTHER" id="PTHR43507">
    <property type="entry name" value="NADH-UBIQUINONE OXIDOREDUCTASE CHAIN 4"/>
    <property type="match status" value="1"/>
</dbReference>
<dbReference type="PANTHER" id="PTHR43507:SF20">
    <property type="entry name" value="NADH-UBIQUINONE OXIDOREDUCTASE CHAIN 4"/>
    <property type="match status" value="1"/>
</dbReference>
<dbReference type="Pfam" id="PF00361">
    <property type="entry name" value="Proton_antipo_M"/>
    <property type="match status" value="1"/>
</dbReference>
<comment type="function">
    <text evidence="1">Core subunit of the mitochondrial membrane respiratory chain NADH dehydrogenase (Complex I) that is believed to belong to the minimal assembly required for catalysis. Complex I functions in the transfer of electrons from NADH to the respiratory chain. The immediate electron acceptor for the enzyme is believed to be ubiquinone (By similarity).</text>
</comment>
<comment type="catalytic activity">
    <reaction>
        <text>a ubiquinone + NADH + 5 H(+)(in) = a ubiquinol + NAD(+) + 4 H(+)(out)</text>
        <dbReference type="Rhea" id="RHEA:29091"/>
        <dbReference type="Rhea" id="RHEA-COMP:9565"/>
        <dbReference type="Rhea" id="RHEA-COMP:9566"/>
        <dbReference type="ChEBI" id="CHEBI:15378"/>
        <dbReference type="ChEBI" id="CHEBI:16389"/>
        <dbReference type="ChEBI" id="CHEBI:17976"/>
        <dbReference type="ChEBI" id="CHEBI:57540"/>
        <dbReference type="ChEBI" id="CHEBI:57945"/>
        <dbReference type="EC" id="7.1.1.2"/>
    </reaction>
</comment>
<comment type="subcellular location">
    <subcellularLocation>
        <location evidence="1">Mitochondrion membrane</location>
        <topology evidence="1">Multi-pass membrane protein</topology>
    </subcellularLocation>
</comment>
<comment type="similarity">
    <text evidence="3">Belongs to the complex I subunit 4 family.</text>
</comment>
<feature type="chain" id="PRO_0000117897" description="NADH-ubiquinone oxidoreductase chain 4">
    <location>
        <begin position="1" status="less than"/>
        <end position="231" status="greater than"/>
    </location>
</feature>
<feature type="transmembrane region" description="Helical" evidence="2">
    <location>
        <begin position="1"/>
        <end position="21"/>
    </location>
</feature>
<feature type="transmembrane region" description="Helical" evidence="2">
    <location>
        <begin position="34"/>
        <end position="54"/>
    </location>
</feature>
<feature type="transmembrane region" description="Helical" evidence="2">
    <location>
        <begin position="61"/>
        <end position="80"/>
    </location>
</feature>
<feature type="transmembrane region" description="Helical" evidence="2">
    <location>
        <begin position="84"/>
        <end position="106"/>
    </location>
</feature>
<feature type="transmembrane region" description="Helical" evidence="2">
    <location>
        <begin position="128"/>
        <end position="148"/>
    </location>
</feature>
<feature type="transmembrane region" description="Helical" evidence="2">
    <location>
        <begin position="169"/>
        <end position="189"/>
    </location>
</feature>
<feature type="non-terminal residue">
    <location>
        <position position="1"/>
    </location>
</feature>
<feature type="non-terminal residue">
    <location>
        <position position="231"/>
    </location>
</feature>
<protein>
    <recommendedName>
        <fullName>NADH-ubiquinone oxidoreductase chain 4</fullName>
        <ecNumber>7.1.1.2</ecNumber>
    </recommendedName>
    <alternativeName>
        <fullName>NADH dehydrogenase subunit 4</fullName>
    </alternativeName>
</protein>
<evidence type="ECO:0000250" key="1"/>
<evidence type="ECO:0000255" key="2"/>
<evidence type="ECO:0000305" key="3"/>
<accession>O03695</accession>
<geneLocation type="mitochondrion"/>
<reference key="1">
    <citation type="journal article" date="1996" name="Copeia">
        <title>Crotaline intergeneric relationships based on mitochondrial DNA sequence data.</title>
        <authorList>
            <person name="Kraus F."/>
            <person name="Mink D.G."/>
            <person name="Brown W.M."/>
        </authorList>
    </citation>
    <scope>NUCLEOTIDE SEQUENCE [GENOMIC DNA]</scope>
</reference>
<proteinExistence type="inferred from homology"/>